<keyword id="KW-0025">Alternative splicing</keyword>
<keyword id="KW-0968">Cytoplasmic vesicle</keyword>
<keyword id="KW-0472">Membrane</keyword>
<keyword id="KW-0496">Mitochondrion</keyword>
<keyword id="KW-0999">Mitochondrion inner membrane</keyword>
<keyword id="KW-1185">Reference proteome</keyword>
<protein>
    <recommendedName>
        <fullName>Ubiquinol-cytochrome c reductase complex assembly factor 1</fullName>
    </recommendedName>
    <alternativeName>
        <fullName>Basic FGF-repressed Zic-binding protein</fullName>
        <shortName>mbFZb</shortName>
    </alternativeName>
    <alternativeName>
        <fullName>Ubiquinol-cytochrome c reductase complex chaperone CBP3 homolog</fullName>
    </alternativeName>
</protein>
<reference key="1">
    <citation type="journal article" date="2005" name="Science">
        <title>The transcriptional landscape of the mammalian genome.</title>
        <authorList>
            <person name="Carninci P."/>
            <person name="Kasukawa T."/>
            <person name="Katayama S."/>
            <person name="Gough J."/>
            <person name="Frith M.C."/>
            <person name="Maeda N."/>
            <person name="Oyama R."/>
            <person name="Ravasi T."/>
            <person name="Lenhard B."/>
            <person name="Wells C."/>
            <person name="Kodzius R."/>
            <person name="Shimokawa K."/>
            <person name="Bajic V.B."/>
            <person name="Brenner S.E."/>
            <person name="Batalov S."/>
            <person name="Forrest A.R."/>
            <person name="Zavolan M."/>
            <person name="Davis M.J."/>
            <person name="Wilming L.G."/>
            <person name="Aidinis V."/>
            <person name="Allen J.E."/>
            <person name="Ambesi-Impiombato A."/>
            <person name="Apweiler R."/>
            <person name="Aturaliya R.N."/>
            <person name="Bailey T.L."/>
            <person name="Bansal M."/>
            <person name="Baxter L."/>
            <person name="Beisel K.W."/>
            <person name="Bersano T."/>
            <person name="Bono H."/>
            <person name="Chalk A.M."/>
            <person name="Chiu K.P."/>
            <person name="Choudhary V."/>
            <person name="Christoffels A."/>
            <person name="Clutterbuck D.R."/>
            <person name="Crowe M.L."/>
            <person name="Dalla E."/>
            <person name="Dalrymple B.P."/>
            <person name="de Bono B."/>
            <person name="Della Gatta G."/>
            <person name="di Bernardo D."/>
            <person name="Down T."/>
            <person name="Engstrom P."/>
            <person name="Fagiolini M."/>
            <person name="Faulkner G."/>
            <person name="Fletcher C.F."/>
            <person name="Fukushima T."/>
            <person name="Furuno M."/>
            <person name="Futaki S."/>
            <person name="Gariboldi M."/>
            <person name="Georgii-Hemming P."/>
            <person name="Gingeras T.R."/>
            <person name="Gojobori T."/>
            <person name="Green R.E."/>
            <person name="Gustincich S."/>
            <person name="Harbers M."/>
            <person name="Hayashi Y."/>
            <person name="Hensch T.K."/>
            <person name="Hirokawa N."/>
            <person name="Hill D."/>
            <person name="Huminiecki L."/>
            <person name="Iacono M."/>
            <person name="Ikeo K."/>
            <person name="Iwama A."/>
            <person name="Ishikawa T."/>
            <person name="Jakt M."/>
            <person name="Kanapin A."/>
            <person name="Katoh M."/>
            <person name="Kawasawa Y."/>
            <person name="Kelso J."/>
            <person name="Kitamura H."/>
            <person name="Kitano H."/>
            <person name="Kollias G."/>
            <person name="Krishnan S.P."/>
            <person name="Kruger A."/>
            <person name="Kummerfeld S.K."/>
            <person name="Kurochkin I.V."/>
            <person name="Lareau L.F."/>
            <person name="Lazarevic D."/>
            <person name="Lipovich L."/>
            <person name="Liu J."/>
            <person name="Liuni S."/>
            <person name="McWilliam S."/>
            <person name="Madan Babu M."/>
            <person name="Madera M."/>
            <person name="Marchionni L."/>
            <person name="Matsuda H."/>
            <person name="Matsuzawa S."/>
            <person name="Miki H."/>
            <person name="Mignone F."/>
            <person name="Miyake S."/>
            <person name="Morris K."/>
            <person name="Mottagui-Tabar S."/>
            <person name="Mulder N."/>
            <person name="Nakano N."/>
            <person name="Nakauchi H."/>
            <person name="Ng P."/>
            <person name="Nilsson R."/>
            <person name="Nishiguchi S."/>
            <person name="Nishikawa S."/>
            <person name="Nori F."/>
            <person name="Ohara O."/>
            <person name="Okazaki Y."/>
            <person name="Orlando V."/>
            <person name="Pang K.C."/>
            <person name="Pavan W.J."/>
            <person name="Pavesi G."/>
            <person name="Pesole G."/>
            <person name="Petrovsky N."/>
            <person name="Piazza S."/>
            <person name="Reed J."/>
            <person name="Reid J.F."/>
            <person name="Ring B.Z."/>
            <person name="Ringwald M."/>
            <person name="Rost B."/>
            <person name="Ruan Y."/>
            <person name="Salzberg S.L."/>
            <person name="Sandelin A."/>
            <person name="Schneider C."/>
            <person name="Schoenbach C."/>
            <person name="Sekiguchi K."/>
            <person name="Semple C.A."/>
            <person name="Seno S."/>
            <person name="Sessa L."/>
            <person name="Sheng Y."/>
            <person name="Shibata Y."/>
            <person name="Shimada H."/>
            <person name="Shimada K."/>
            <person name="Silva D."/>
            <person name="Sinclair B."/>
            <person name="Sperling S."/>
            <person name="Stupka E."/>
            <person name="Sugiura K."/>
            <person name="Sultana R."/>
            <person name="Takenaka Y."/>
            <person name="Taki K."/>
            <person name="Tammoja K."/>
            <person name="Tan S.L."/>
            <person name="Tang S."/>
            <person name="Taylor M.S."/>
            <person name="Tegner J."/>
            <person name="Teichmann S.A."/>
            <person name="Ueda H.R."/>
            <person name="van Nimwegen E."/>
            <person name="Verardo R."/>
            <person name="Wei C.L."/>
            <person name="Yagi K."/>
            <person name="Yamanishi H."/>
            <person name="Zabarovsky E."/>
            <person name="Zhu S."/>
            <person name="Zimmer A."/>
            <person name="Hide W."/>
            <person name="Bult C."/>
            <person name="Grimmond S.M."/>
            <person name="Teasdale R.D."/>
            <person name="Liu E.T."/>
            <person name="Brusic V."/>
            <person name="Quackenbush J."/>
            <person name="Wahlestedt C."/>
            <person name="Mattick J.S."/>
            <person name="Hume D.A."/>
            <person name="Kai C."/>
            <person name="Sasaki D."/>
            <person name="Tomaru Y."/>
            <person name="Fukuda S."/>
            <person name="Kanamori-Katayama M."/>
            <person name="Suzuki M."/>
            <person name="Aoki J."/>
            <person name="Arakawa T."/>
            <person name="Iida J."/>
            <person name="Imamura K."/>
            <person name="Itoh M."/>
            <person name="Kato T."/>
            <person name="Kawaji H."/>
            <person name="Kawagashira N."/>
            <person name="Kawashima T."/>
            <person name="Kojima M."/>
            <person name="Kondo S."/>
            <person name="Konno H."/>
            <person name="Nakano K."/>
            <person name="Ninomiya N."/>
            <person name="Nishio T."/>
            <person name="Okada M."/>
            <person name="Plessy C."/>
            <person name="Shibata K."/>
            <person name="Shiraki T."/>
            <person name="Suzuki S."/>
            <person name="Tagami M."/>
            <person name="Waki K."/>
            <person name="Watahiki A."/>
            <person name="Okamura-Oho Y."/>
            <person name="Suzuki H."/>
            <person name="Kawai J."/>
            <person name="Hayashizaki Y."/>
        </authorList>
    </citation>
    <scope>NUCLEOTIDE SEQUENCE [LARGE SCALE MRNA]</scope>
    <source>
        <strain>C57BL/6J</strain>
        <tissue>Egg</tissue>
        <tissue>Embryo</tissue>
        <tissue>Embryonic head</tissue>
        <tissue>Embryonic stem cell</tissue>
        <tissue>Pituitary</tissue>
    </source>
</reference>
<reference key="2">
    <citation type="journal article" date="2009" name="PLoS Biol.">
        <title>Lineage-specific biology revealed by a finished genome assembly of the mouse.</title>
        <authorList>
            <person name="Church D.M."/>
            <person name="Goodstadt L."/>
            <person name="Hillier L.W."/>
            <person name="Zody M.C."/>
            <person name="Goldstein S."/>
            <person name="She X."/>
            <person name="Bult C.J."/>
            <person name="Agarwala R."/>
            <person name="Cherry J.L."/>
            <person name="DiCuccio M."/>
            <person name="Hlavina W."/>
            <person name="Kapustin Y."/>
            <person name="Meric P."/>
            <person name="Maglott D."/>
            <person name="Birtle Z."/>
            <person name="Marques A.C."/>
            <person name="Graves T."/>
            <person name="Zhou S."/>
            <person name="Teague B."/>
            <person name="Potamousis K."/>
            <person name="Churas C."/>
            <person name="Place M."/>
            <person name="Herschleb J."/>
            <person name="Runnheim R."/>
            <person name="Forrest D."/>
            <person name="Amos-Landgraf J."/>
            <person name="Schwartz D.C."/>
            <person name="Cheng Z."/>
            <person name="Lindblad-Toh K."/>
            <person name="Eichler E.E."/>
            <person name="Ponting C.P."/>
        </authorList>
    </citation>
    <scope>NUCLEOTIDE SEQUENCE [LARGE SCALE GENOMIC DNA]</scope>
    <source>
        <strain>C57BL/6J</strain>
    </source>
</reference>
<reference key="3">
    <citation type="journal article" date="2004" name="Genome Res.">
        <title>The status, quality, and expansion of the NIH full-length cDNA project: the Mammalian Gene Collection (MGC).</title>
        <authorList>
            <consortium name="The MGC Project Team"/>
        </authorList>
    </citation>
    <scope>NUCLEOTIDE SEQUENCE [LARGE SCALE MRNA] (ISOFORM 1)</scope>
    <source>
        <strain>C57BL/6J</strain>
        <tissue>Brain</tissue>
    </source>
</reference>
<reference key="4">
    <citation type="journal article" date="2001" name="Mech. Dev.">
        <title>Expression of a novel mouse gene 'mbFZb' in distinct regions of the developing nervous system and the adult brain.</title>
        <authorList>
            <person name="Vetter K."/>
            <person name="Wurst W."/>
        </authorList>
    </citation>
    <scope>NUCLEOTIDE SEQUENCE [MRNA] OF 3-295 (ISOFORM 1)</scope>
    <scope>TISSUE SPECIFICITY</scope>
    <scope>DEVELOPMENTAL STAGE</scope>
    <scope>INDUCTION</scope>
    <source>
        <tissue>Embryonic stem cell</tissue>
    </source>
</reference>
<reference key="5">
    <citation type="journal article" date="2010" name="Cell">
        <title>A tissue-specific atlas of mouse protein phosphorylation and expression.</title>
        <authorList>
            <person name="Huttlin E.L."/>
            <person name="Jedrychowski M.P."/>
            <person name="Elias J.E."/>
            <person name="Goswami T."/>
            <person name="Rad R."/>
            <person name="Beausoleil S.A."/>
            <person name="Villen J."/>
            <person name="Haas W."/>
            <person name="Sowa M.E."/>
            <person name="Gygi S.P."/>
        </authorList>
    </citation>
    <scope>IDENTIFICATION BY MASS SPECTROMETRY [LARGE SCALE ANALYSIS]</scope>
    <source>
        <tissue>Brain</tissue>
        <tissue>Brown adipose tissue</tissue>
        <tissue>Heart</tissue>
        <tissue>Kidney</tissue>
        <tissue>Liver</tissue>
        <tissue>Lung</tissue>
        <tissue>Testis</tissue>
    </source>
</reference>
<reference key="6">
    <citation type="journal article" date="2022" name="Cell Rep.">
        <title>Mitochondrial microproteins link metabolic cues to respiratory chain biogenesis.</title>
        <authorList>
            <person name="Liang C."/>
            <person name="Zhang S."/>
            <person name="Robinson D."/>
            <person name="Ploeg M.V."/>
            <person name="Wilson R."/>
            <person name="Nah J."/>
            <person name="Taylor D."/>
            <person name="Beh S."/>
            <person name="Lim R."/>
            <person name="Sun L."/>
            <person name="Muoio D.M."/>
            <person name="Stroud D.A."/>
            <person name="Ho L."/>
        </authorList>
    </citation>
    <scope>SUBUNIT</scope>
    <scope>INTERACTION WITH UQCC3</scope>
</reference>
<evidence type="ECO:0000250" key="1">
    <source>
        <dbReference type="UniProtKB" id="Q9NVA1"/>
    </source>
</evidence>
<evidence type="ECO:0000269" key="2">
    <source>
    </source>
</evidence>
<evidence type="ECO:0000269" key="3">
    <source>
    </source>
</evidence>
<evidence type="ECO:0000305" key="4"/>
<feature type="chain" id="PRO_0000206561" description="Ubiquinol-cytochrome c reductase complex assembly factor 1">
    <location>
        <begin position="1"/>
        <end position="295"/>
    </location>
</feature>
<feature type="splice variant" id="VSP_000858" description="In isoform 2." evidence="4">
    <original>S</original>
    <variation>T</variation>
    <location>
        <position position="70"/>
    </location>
</feature>
<feature type="splice variant" id="VSP_000859" description="In isoform 2." evidence="4">
    <location>
        <begin position="71"/>
        <end position="207"/>
    </location>
</feature>
<feature type="sequence conflict" description="In Ref. 1; BAC36749." evidence="4" ref="1">
    <original>G</original>
    <variation>V</variation>
    <location>
        <position position="97"/>
    </location>
</feature>
<dbReference type="EMBL" id="AK010376">
    <property type="protein sequence ID" value="BAB26894.1"/>
    <property type="molecule type" value="mRNA"/>
</dbReference>
<dbReference type="EMBL" id="AK011152">
    <property type="protein sequence ID" value="BAB27433.1"/>
    <property type="status" value="ALT_SEQ"/>
    <property type="molecule type" value="mRNA"/>
</dbReference>
<dbReference type="EMBL" id="AK019425">
    <property type="status" value="NOT_ANNOTATED_CDS"/>
    <property type="molecule type" value="mRNA"/>
</dbReference>
<dbReference type="EMBL" id="AK077323">
    <property type="protein sequence ID" value="BAC36749.1"/>
    <property type="molecule type" value="mRNA"/>
</dbReference>
<dbReference type="EMBL" id="AK139488">
    <property type="protein sequence ID" value="BAE24034.1"/>
    <property type="molecule type" value="mRNA"/>
</dbReference>
<dbReference type="EMBL" id="AK169413">
    <property type="protein sequence ID" value="BAE41159.1"/>
    <property type="molecule type" value="mRNA"/>
</dbReference>
<dbReference type="EMBL" id="AL845445">
    <property type="status" value="NOT_ANNOTATED_CDS"/>
    <property type="molecule type" value="Genomic_DNA"/>
</dbReference>
<dbReference type="EMBL" id="BC050884">
    <property type="protein sequence ID" value="AAH50884.1"/>
    <property type="molecule type" value="mRNA"/>
</dbReference>
<dbReference type="EMBL" id="BC057570">
    <property type="protein sequence ID" value="AAH57570.1"/>
    <property type="molecule type" value="mRNA"/>
</dbReference>
<dbReference type="EMBL" id="AF253516">
    <property type="protein sequence ID" value="AAF64519.1"/>
    <property type="status" value="ALT_INIT"/>
    <property type="molecule type" value="mRNA"/>
</dbReference>
<dbReference type="CCDS" id="CCDS16957.2">
    <molecule id="Q9CWU6-1"/>
</dbReference>
<dbReference type="RefSeq" id="NP_061376.2">
    <molecule id="Q9CWU6-1"/>
    <property type="nucleotide sequence ID" value="NM_018888.4"/>
</dbReference>
<dbReference type="SMR" id="Q9CWU6"/>
<dbReference type="BioGRID" id="207792">
    <property type="interactions" value="2"/>
</dbReference>
<dbReference type="FunCoup" id="Q9CWU6">
    <property type="interactions" value="1727"/>
</dbReference>
<dbReference type="STRING" id="10090.ENSMUSP00000105264"/>
<dbReference type="iPTMnet" id="Q9CWU6"/>
<dbReference type="PhosphoSitePlus" id="Q9CWU6"/>
<dbReference type="SwissPalm" id="Q9CWU6"/>
<dbReference type="PaxDb" id="10090-ENSMUSP00000105264"/>
<dbReference type="PeptideAtlas" id="Q9CWU6"/>
<dbReference type="ProteomicsDB" id="299643">
    <molecule id="Q9CWU6-1"/>
</dbReference>
<dbReference type="ProteomicsDB" id="299644">
    <molecule id="Q9CWU6-2"/>
</dbReference>
<dbReference type="Pumba" id="Q9CWU6"/>
<dbReference type="Antibodypedia" id="26044">
    <property type="antibodies" value="37 antibodies from 13 providers"/>
</dbReference>
<dbReference type="DNASU" id="56046"/>
<dbReference type="Ensembl" id="ENSMUST00000109636.11">
    <molecule id="Q9CWU6-1"/>
    <property type="protein sequence ID" value="ENSMUSP00000105264.5"/>
    <property type="gene ID" value="ENSMUSG00000005882.19"/>
</dbReference>
<dbReference type="GeneID" id="56046"/>
<dbReference type="KEGG" id="mmu:56046"/>
<dbReference type="UCSC" id="uc008nlo.2">
    <molecule id="Q9CWU6-1"/>
    <property type="organism name" value="mouse"/>
</dbReference>
<dbReference type="AGR" id="MGI:1929472"/>
<dbReference type="CTD" id="55245"/>
<dbReference type="MGI" id="MGI:1929472">
    <property type="gene designation" value="Uqcc1"/>
</dbReference>
<dbReference type="VEuPathDB" id="HostDB:ENSMUSG00000005882"/>
<dbReference type="eggNOG" id="KOG2873">
    <property type="taxonomic scope" value="Eukaryota"/>
</dbReference>
<dbReference type="GeneTree" id="ENSGT00390000018118"/>
<dbReference type="InParanoid" id="Q9CWU6"/>
<dbReference type="OMA" id="TWFLITE"/>
<dbReference type="OrthoDB" id="4007at2759"/>
<dbReference type="PhylomeDB" id="Q9CWU6"/>
<dbReference type="TreeFam" id="TF313220"/>
<dbReference type="BioGRID-ORCS" id="56046">
    <property type="hits" value="17 hits in 78 CRISPR screens"/>
</dbReference>
<dbReference type="ChiTaRS" id="Uqcc1">
    <property type="organism name" value="mouse"/>
</dbReference>
<dbReference type="PRO" id="PR:Q9CWU6"/>
<dbReference type="Proteomes" id="UP000000589">
    <property type="component" value="Chromosome 2"/>
</dbReference>
<dbReference type="RNAct" id="Q9CWU6">
    <property type="molecule type" value="protein"/>
</dbReference>
<dbReference type="Bgee" id="ENSMUSG00000005882">
    <property type="expression patterns" value="Expressed in hindlimb stylopod muscle and 276 other cell types or tissues"/>
</dbReference>
<dbReference type="ExpressionAtlas" id="Q9CWU6">
    <property type="expression patterns" value="baseline and differential"/>
</dbReference>
<dbReference type="GO" id="GO:0031410">
    <property type="term" value="C:cytoplasmic vesicle"/>
    <property type="evidence" value="ECO:0000314"/>
    <property type="project" value="MGI"/>
</dbReference>
<dbReference type="GO" id="GO:0005743">
    <property type="term" value="C:mitochondrial inner membrane"/>
    <property type="evidence" value="ECO:0000250"/>
    <property type="project" value="UniProtKB"/>
</dbReference>
<dbReference type="GO" id="GO:0005739">
    <property type="term" value="C:mitochondrion"/>
    <property type="evidence" value="ECO:0007005"/>
    <property type="project" value="MGI"/>
</dbReference>
<dbReference type="GO" id="GO:0034551">
    <property type="term" value="P:mitochondrial respiratory chain complex III assembly"/>
    <property type="evidence" value="ECO:0000250"/>
    <property type="project" value="UniProtKB"/>
</dbReference>
<dbReference type="InterPro" id="IPR021150">
    <property type="entry name" value="Ubiq_cyt_c_chap"/>
</dbReference>
<dbReference type="InterPro" id="IPR007129">
    <property type="entry name" value="Ubiqinol_cyt_c_chaperone_CPB3"/>
</dbReference>
<dbReference type="PANTHER" id="PTHR12184">
    <property type="entry name" value="UBIQUINOL-CYTOCHROME C REDUCTASE COMPLEX ASSEMBLY FACTOR 1 FAMILY MEMBER"/>
    <property type="match status" value="1"/>
</dbReference>
<dbReference type="PANTHER" id="PTHR12184:SF1">
    <property type="entry name" value="UBIQUINOL-CYTOCHROME-C REDUCTASE COMPLEX ASSEMBLY FACTOR 1"/>
    <property type="match status" value="1"/>
</dbReference>
<dbReference type="Pfam" id="PF03981">
    <property type="entry name" value="Ubiq_cyt_C_chap"/>
    <property type="match status" value="1"/>
</dbReference>
<accession>Q9CWU6</accession>
<accession>A2ARK1</accession>
<accession>Q3TET9</accession>
<accession>Q9CRP2</accession>
<accession>Q9JK78</accession>
<gene>
    <name type="primary">Uqcc1</name>
    <name type="synonym">Bfzb</name>
    <name type="synonym">Uqcc</name>
</gene>
<proteinExistence type="evidence at protein level"/>
<name>UQCC1_MOUSE</name>
<organism>
    <name type="scientific">Mus musculus</name>
    <name type="common">Mouse</name>
    <dbReference type="NCBI Taxonomy" id="10090"/>
    <lineage>
        <taxon>Eukaryota</taxon>
        <taxon>Metazoa</taxon>
        <taxon>Chordata</taxon>
        <taxon>Craniata</taxon>
        <taxon>Vertebrata</taxon>
        <taxon>Euteleostomi</taxon>
        <taxon>Mammalia</taxon>
        <taxon>Eutheria</taxon>
        <taxon>Euarchontoglires</taxon>
        <taxon>Glires</taxon>
        <taxon>Rodentia</taxon>
        <taxon>Myomorpha</taxon>
        <taxon>Muroidea</taxon>
        <taxon>Muridae</taxon>
        <taxon>Murinae</taxon>
        <taxon>Mus</taxon>
        <taxon>Mus</taxon>
    </lineage>
</organism>
<sequence>MALLVRVLRNQTSISQWVPVCSQLVSVSPTQRQWSSTSQWLQKNQSRVCLGSEQTVGADTAQNRKYHNTSKLLTTQDFPQPVEEKVGPFTKIIEAMGFTGPLKYSKWKIKIAALRMYTSCVEKTDFEEFFLRCQMPDTFNSWFLITLLHVWMCLVRMKQEGRTGKYMCRIIVHFMWEDVEQRGRVMGVNSYILKKNMALMTNNFYAAILGYDEGILSDDHGLAAALWRTFFNQKCEDPRQLELLVEYVRKQMQYLDSMNGEDLLLTGEVRWRPLVEKNPQSILKPHAPTYNDEGL</sequence>
<comment type="function">
    <text evidence="3">Required for the assembly of the ubiquinol-cytochrome c reductase complex (mitochondrial respiratory chain complex III or cytochrome b-c1 complex) (PubMed:35977508). Involved in cytochrome b translation and/or stability (PubMed:35977508).</text>
</comment>
<comment type="subunit">
    <text evidence="1 3">Interacts with UQCC2 (By similarity). Interacts with UQCC3 (PubMed:35977508). Forms a complex, named COMB/coordinator of mitochondrial CYTB biogenesis, composed of UQCC1, UQCC2, UQCC4, UQCC5 and UQCC6; stabilizes nascent cytochrome b/MT-CYB and promotes its membrane insertion (PubMed:35977508). Forms a complex, named COMA, composed of UQCC1, UQCC2 and UQCC4; activates MT-CYB translation (PubMed:35977508). Forms a complex, named COMC, composed of UQCC1, UQCC2; UQCC3 and UQCC4; mediates MT-CYB hemylation and association with the first nuclear-encoded CIII subunit UQCRQ (PubMed:35977508).</text>
</comment>
<comment type="subcellular location">
    <subcellularLocation>
        <location evidence="1">Mitochondrion inner membrane</location>
    </subcellularLocation>
    <subcellularLocation>
        <location evidence="4">Cytoplasmic vesicle</location>
    </subcellularLocation>
    <text evidence="4">Cytoplasmic vesicular structures.</text>
</comment>
<comment type="alternative products">
    <event type="alternative splicing"/>
    <isoform>
        <id>Q9CWU6-1</id>
        <name>1</name>
        <sequence type="displayed"/>
    </isoform>
    <isoform>
        <id>Q9CWU6-2</id>
        <name>2</name>
        <sequence type="described" ref="VSP_000858 VSP_000859"/>
    </isoform>
</comment>
<comment type="tissue specificity">
    <text evidence="2">In the brain it is restricted to the olfactory bulb, the hippocampus, the piriform cortex and the Purkinje cells.</text>
</comment>
<comment type="developmental stage">
    <text evidence="2">Expressed mainly in the developing nervous system from 9.5 dpc onwards. Also detected in the developing eye and the brown fat.</text>
</comment>
<comment type="induction">
    <text evidence="2">Repressed by bFGF; in embryonic stem cells.</text>
</comment>
<comment type="similarity">
    <text evidence="4">Belongs to the CBP3 family.</text>
</comment>
<comment type="sequence caution" evidence="4">
    <conflict type="erroneous initiation">
        <sequence resource="EMBL-CDS" id="AAF64519"/>
    </conflict>
    <text>Truncated N-terminus.</text>
</comment>
<comment type="sequence caution" evidence="4">
    <conflict type="erroneous termination">
        <sequence resource="EMBL-CDS" id="BAB27433"/>
    </conflict>
    <text>Truncated C-terminus.</text>
</comment>